<feature type="chain" id="PRO_0000410850" description="Octanoyltransferase LipM">
    <location>
        <begin position="1"/>
        <end position="278"/>
    </location>
</feature>
<feature type="domain" description="BPL/LPL catalytic" evidence="2">
    <location>
        <begin position="33"/>
        <end position="248"/>
    </location>
</feature>
<feature type="active site" description="Acyl-thioester intermediate" evidence="1">
    <location>
        <position position="150"/>
    </location>
</feature>
<feature type="site" description="Lowers pKa of active site Cys" evidence="1">
    <location>
        <position position="165"/>
    </location>
</feature>
<comment type="function">
    <text evidence="1">Catalyzes the transfer of endogenously produced octanoic acid from octanoyl-acyl-carrier-protein onto the lipoyl domain of GcvH, an intermediate carrier during protein lipoylation.</text>
</comment>
<comment type="catalytic activity">
    <reaction evidence="1">
        <text>octanoyl-[ACP] + L-lysyl-[protein] = N(6)-octanoyl-L-lysyl-[protein] + holo-[ACP] + H(+)</text>
        <dbReference type="Rhea" id="RHEA:17665"/>
        <dbReference type="Rhea" id="RHEA-COMP:9636"/>
        <dbReference type="Rhea" id="RHEA-COMP:9685"/>
        <dbReference type="Rhea" id="RHEA-COMP:9752"/>
        <dbReference type="Rhea" id="RHEA-COMP:9928"/>
        <dbReference type="ChEBI" id="CHEBI:15378"/>
        <dbReference type="ChEBI" id="CHEBI:29969"/>
        <dbReference type="ChEBI" id="CHEBI:64479"/>
        <dbReference type="ChEBI" id="CHEBI:78463"/>
        <dbReference type="ChEBI" id="CHEBI:78809"/>
        <dbReference type="EC" id="2.3.1.181"/>
    </reaction>
</comment>
<comment type="pathway">
    <text evidence="1">Protein modification; protein lipoylation via endogenous pathway; protein N(6)-(lipoyl)lysine from octanoyl-[acyl-carrier-protein].</text>
</comment>
<comment type="subunit">
    <text evidence="1">Monomer.</text>
</comment>
<comment type="miscellaneous">
    <text evidence="1">In the reaction, the free carboxyl group of octanoic acid is attached via an amide linkage to the epsilon-amino group of a specific lysine residue of lipoyl domains of lipoate-dependent enzymes. The reaction proceeds via an octanoyl-thioester enzyme intermediate.</text>
</comment>
<comment type="similarity">
    <text evidence="1">Belongs to the octanoyltransferase LipM family.</text>
</comment>
<proteinExistence type="inferred from homology"/>
<accession>Q818P0</accession>
<reference key="1">
    <citation type="journal article" date="2003" name="Nature">
        <title>Genome sequence of Bacillus cereus and comparative analysis with Bacillus anthracis.</title>
        <authorList>
            <person name="Ivanova N."/>
            <person name="Sorokin A."/>
            <person name="Anderson I."/>
            <person name="Galleron N."/>
            <person name="Candelon B."/>
            <person name="Kapatral V."/>
            <person name="Bhattacharyya A."/>
            <person name="Reznik G."/>
            <person name="Mikhailova N."/>
            <person name="Lapidus A."/>
            <person name="Chu L."/>
            <person name="Mazur M."/>
            <person name="Goltsman E."/>
            <person name="Larsen N."/>
            <person name="D'Souza M."/>
            <person name="Walunas T."/>
            <person name="Grechkin Y."/>
            <person name="Pusch G."/>
            <person name="Haselkorn R."/>
            <person name="Fonstein M."/>
            <person name="Ehrlich S.D."/>
            <person name="Overbeek R."/>
            <person name="Kyrpides N.C."/>
        </authorList>
    </citation>
    <scope>NUCLEOTIDE SEQUENCE [LARGE SCALE GENOMIC DNA]</scope>
    <source>
        <strain>ATCC 14579 / DSM 31 / CCUG 7414 / JCM 2152 / NBRC 15305 / NCIMB 9373 / NCTC 2599 / NRRL B-3711</strain>
    </source>
</reference>
<gene>
    <name evidence="1" type="primary">lipM</name>
    <name type="ordered locus">BC_4209</name>
</gene>
<name>LIPM_BACCR</name>
<dbReference type="EC" id="2.3.1.181" evidence="1"/>
<dbReference type="EMBL" id="AE016877">
    <property type="protein sequence ID" value="AAP11124.1"/>
    <property type="molecule type" value="Genomic_DNA"/>
</dbReference>
<dbReference type="RefSeq" id="NP_833923.1">
    <property type="nucleotide sequence ID" value="NC_004722.1"/>
</dbReference>
<dbReference type="RefSeq" id="WP_000514081.1">
    <property type="nucleotide sequence ID" value="NZ_CP138336.1"/>
</dbReference>
<dbReference type="SMR" id="Q818P0"/>
<dbReference type="STRING" id="226900.BC_4209"/>
<dbReference type="KEGG" id="bce:BC4209"/>
<dbReference type="PATRIC" id="fig|226900.8.peg.4348"/>
<dbReference type="HOGENOM" id="CLU_022986_5_0_9"/>
<dbReference type="OrthoDB" id="9774653at2"/>
<dbReference type="Proteomes" id="UP000001417">
    <property type="component" value="Chromosome"/>
</dbReference>
<dbReference type="GO" id="GO:0033819">
    <property type="term" value="F:lipoyl(octanoyl) transferase activity"/>
    <property type="evidence" value="ECO:0007669"/>
    <property type="project" value="UniProtKB-UniRule"/>
</dbReference>
<dbReference type="GO" id="GO:0009107">
    <property type="term" value="P:lipoate biosynthetic process"/>
    <property type="evidence" value="ECO:0007669"/>
    <property type="project" value="UniProtKB-UniRule"/>
</dbReference>
<dbReference type="GO" id="GO:0036211">
    <property type="term" value="P:protein modification process"/>
    <property type="evidence" value="ECO:0007669"/>
    <property type="project" value="InterPro"/>
</dbReference>
<dbReference type="CDD" id="cd16443">
    <property type="entry name" value="LplA"/>
    <property type="match status" value="1"/>
</dbReference>
<dbReference type="Gene3D" id="3.30.930.10">
    <property type="entry name" value="Bira Bifunctional Protein, Domain 2"/>
    <property type="match status" value="1"/>
</dbReference>
<dbReference type="HAMAP" id="MF_02118">
    <property type="entry name" value="LipM"/>
    <property type="match status" value="1"/>
</dbReference>
<dbReference type="InterPro" id="IPR045864">
    <property type="entry name" value="aa-tRNA-synth_II/BPL/LPL"/>
</dbReference>
<dbReference type="InterPro" id="IPR004143">
    <property type="entry name" value="BPL_LPL_catalytic"/>
</dbReference>
<dbReference type="InterPro" id="IPR024898">
    <property type="entry name" value="LipM"/>
</dbReference>
<dbReference type="InterPro" id="IPR050664">
    <property type="entry name" value="Octanoyltrans_LipM/LipL"/>
</dbReference>
<dbReference type="PANTHER" id="PTHR43679:SF2">
    <property type="entry name" value="OCTANOYL-[GCVH]:PROTEIN N-OCTANOYLTRANSFERASE"/>
    <property type="match status" value="1"/>
</dbReference>
<dbReference type="PANTHER" id="PTHR43679">
    <property type="entry name" value="OCTANOYLTRANSFERASE LIPM-RELATED"/>
    <property type="match status" value="1"/>
</dbReference>
<dbReference type="Pfam" id="PF21948">
    <property type="entry name" value="LplA-B_cat"/>
    <property type="match status" value="1"/>
</dbReference>
<dbReference type="SUPFAM" id="SSF55681">
    <property type="entry name" value="Class II aaRS and biotin synthetases"/>
    <property type="match status" value="1"/>
</dbReference>
<dbReference type="PROSITE" id="PS51733">
    <property type="entry name" value="BPL_LPL_CATALYTIC"/>
    <property type="match status" value="1"/>
</dbReference>
<keyword id="KW-0012">Acyltransferase</keyword>
<keyword id="KW-1185">Reference proteome</keyword>
<keyword id="KW-0808">Transferase</keyword>
<evidence type="ECO:0000255" key="1">
    <source>
        <dbReference type="HAMAP-Rule" id="MF_02118"/>
    </source>
</evidence>
<evidence type="ECO:0000255" key="2">
    <source>
        <dbReference type="PROSITE-ProRule" id="PRU01067"/>
    </source>
</evidence>
<protein>
    <recommendedName>
        <fullName evidence="1">Octanoyltransferase LipM</fullName>
        <ecNumber evidence="1">2.3.1.181</ecNumber>
    </recommendedName>
    <alternativeName>
        <fullName evidence="1">Octanoyl-[acyl-carrier-protein]:[GcvH] N-octanoyltransferase</fullName>
    </alternativeName>
</protein>
<sequence>MGKEKWCYINSGQCSPAFNMALDECLLNWQSEKKMPPTIRFYEWEVPTLTVGYFQRVEKDINMDVVNEKKYGFVRRQTGGRGVLHDKELTYSVIVSEDHPNMPKTVTEAYRVISQGLLDGFKALGLEAYYAVPKTEADRENLKNPRSGVCFDAPSWYEIVVEGRKIAGSAQTRQKGVILQHGSIPLEIDLDELYDLFLFPNERVKERMKSMFSSKAVAINELTDRTFTIEQLIKAFEVGFEKGLDVELVPYELTEEQLHEVQTLAKEKYESNEWNYKK</sequence>
<organism>
    <name type="scientific">Bacillus cereus (strain ATCC 14579 / DSM 31 / CCUG 7414 / JCM 2152 / NBRC 15305 / NCIMB 9373 / NCTC 2599 / NRRL B-3711)</name>
    <dbReference type="NCBI Taxonomy" id="226900"/>
    <lineage>
        <taxon>Bacteria</taxon>
        <taxon>Bacillati</taxon>
        <taxon>Bacillota</taxon>
        <taxon>Bacilli</taxon>
        <taxon>Bacillales</taxon>
        <taxon>Bacillaceae</taxon>
        <taxon>Bacillus</taxon>
        <taxon>Bacillus cereus group</taxon>
    </lineage>
</organism>